<reference key="1">
    <citation type="journal article" date="1999" name="Mol. Biol. Evol.">
        <title>Sequence evolution of the CCR5 chemokine receptor gene in primates.</title>
        <authorList>
            <person name="Zhang Y.-W."/>
            <person name="Ryder O.A."/>
            <person name="Zhang Y.-P."/>
        </authorList>
    </citation>
    <scope>NUCLEOTIDE SEQUENCE [GENOMIC DNA]</scope>
</reference>
<evidence type="ECO:0000250" key="1">
    <source>
        <dbReference type="UniProtKB" id="P51681"/>
    </source>
</evidence>
<evidence type="ECO:0000250" key="2">
    <source>
        <dbReference type="UniProtKB" id="Q9XT76"/>
    </source>
</evidence>
<evidence type="ECO:0000255" key="3"/>
<evidence type="ECO:0000255" key="4">
    <source>
        <dbReference type="PROSITE-ProRule" id="PRU00521"/>
    </source>
</evidence>
<gene>
    <name type="primary">CCR5</name>
    <name type="synonym">CMKBR5</name>
</gene>
<protein>
    <recommendedName>
        <fullName>C-C chemokine receptor type 5</fullName>
        <shortName>C-C CKR-5</shortName>
        <shortName>CC-CKR-5</shortName>
        <shortName>CCR-5</shortName>
        <shortName>CCR5</shortName>
    </recommendedName>
    <cdAntigenName>CD195</cdAntigenName>
</protein>
<organism>
    <name type="scientific">Ateles geoffroyi</name>
    <name type="common">Black-handed spider monkey</name>
    <name type="synonym">Geoffroy's spider monkey</name>
    <dbReference type="NCBI Taxonomy" id="9509"/>
    <lineage>
        <taxon>Eukaryota</taxon>
        <taxon>Metazoa</taxon>
        <taxon>Chordata</taxon>
        <taxon>Craniata</taxon>
        <taxon>Vertebrata</taxon>
        <taxon>Euteleostomi</taxon>
        <taxon>Mammalia</taxon>
        <taxon>Eutheria</taxon>
        <taxon>Euarchontoglires</taxon>
        <taxon>Primates</taxon>
        <taxon>Haplorrhini</taxon>
        <taxon>Platyrrhini</taxon>
        <taxon>Atelidae</taxon>
        <taxon>Atelinae</taxon>
        <taxon>Ateles</taxon>
    </lineage>
</organism>
<feature type="chain" id="PRO_0000069248" description="C-C chemokine receptor type 5">
    <location>
        <begin position="1"/>
        <end position="352"/>
    </location>
</feature>
<feature type="topological domain" description="Extracellular" evidence="3">
    <location>
        <begin position="1"/>
        <end position="30"/>
    </location>
</feature>
<feature type="transmembrane region" description="Helical; Name=1" evidence="3">
    <location>
        <begin position="31"/>
        <end position="58"/>
    </location>
</feature>
<feature type="topological domain" description="Cytoplasmic" evidence="3">
    <location>
        <begin position="59"/>
        <end position="68"/>
    </location>
</feature>
<feature type="transmembrane region" description="Helical; Name=2" evidence="3">
    <location>
        <begin position="69"/>
        <end position="89"/>
    </location>
</feature>
<feature type="topological domain" description="Extracellular" evidence="3">
    <location>
        <begin position="90"/>
        <end position="102"/>
    </location>
</feature>
<feature type="transmembrane region" description="Helical; Name=3" evidence="3">
    <location>
        <begin position="103"/>
        <end position="124"/>
    </location>
</feature>
<feature type="topological domain" description="Cytoplasmic" evidence="3">
    <location>
        <begin position="125"/>
        <end position="141"/>
    </location>
</feature>
<feature type="transmembrane region" description="Helical; Name=4" evidence="3">
    <location>
        <begin position="142"/>
        <end position="166"/>
    </location>
</feature>
<feature type="topological domain" description="Extracellular" evidence="3">
    <location>
        <begin position="167"/>
        <end position="198"/>
    </location>
</feature>
<feature type="transmembrane region" description="Helical; Name=5" evidence="3">
    <location>
        <begin position="199"/>
        <end position="218"/>
    </location>
</feature>
<feature type="topological domain" description="Cytoplasmic" evidence="3">
    <location>
        <begin position="219"/>
        <end position="235"/>
    </location>
</feature>
<feature type="transmembrane region" description="Helical; Name=6" evidence="3">
    <location>
        <begin position="236"/>
        <end position="260"/>
    </location>
</feature>
<feature type="topological domain" description="Extracellular" evidence="3">
    <location>
        <begin position="261"/>
        <end position="277"/>
    </location>
</feature>
<feature type="transmembrane region" description="Helical; Name=7" evidence="3">
    <location>
        <begin position="278"/>
        <end position="301"/>
    </location>
</feature>
<feature type="topological domain" description="Cytoplasmic" evidence="3">
    <location>
        <begin position="302"/>
        <end position="352"/>
    </location>
</feature>
<feature type="modified residue" description="Sulfotyrosine" evidence="1">
    <location>
        <position position="3"/>
    </location>
</feature>
<feature type="modified residue" description="Sulfotyrosine" evidence="3">
    <location>
        <position position="10"/>
    </location>
</feature>
<feature type="modified residue" description="Sulfotyrosine" evidence="3">
    <location>
        <position position="14"/>
    </location>
</feature>
<feature type="modified residue" description="Phosphoserine; by BARK1" evidence="1">
    <location>
        <position position="337"/>
    </location>
</feature>
<feature type="modified residue" description="Phosphoserine; by BARK1" evidence="1">
    <location>
        <position position="342"/>
    </location>
</feature>
<feature type="modified residue" description="Phosphoserine; by BARK1" evidence="1">
    <location>
        <position position="349"/>
    </location>
</feature>
<feature type="lipid moiety-binding region" description="S-palmitoyl cysteine" evidence="1">
    <location>
        <position position="321"/>
    </location>
</feature>
<feature type="lipid moiety-binding region" description="S-palmitoyl cysteine" evidence="1">
    <location>
        <position position="323"/>
    </location>
</feature>
<feature type="lipid moiety-binding region" description="S-palmitoyl cysteine" evidence="1">
    <location>
        <position position="324"/>
    </location>
</feature>
<feature type="glycosylation site" description="O-linked (GalNAc...) serine" evidence="1">
    <location>
        <position position="6"/>
    </location>
</feature>
<feature type="glycosylation site" description="O-linked (GalNAc...) serine" evidence="1">
    <location>
        <position position="7"/>
    </location>
</feature>
<feature type="disulfide bond" evidence="1">
    <location>
        <begin position="20"/>
        <end position="269"/>
    </location>
</feature>
<feature type="disulfide bond" evidence="4">
    <location>
        <begin position="101"/>
        <end position="178"/>
    </location>
</feature>
<keyword id="KW-1003">Cell membrane</keyword>
<keyword id="KW-1015">Disulfide bond</keyword>
<keyword id="KW-0297">G-protein coupled receptor</keyword>
<keyword id="KW-0325">Glycoprotein</keyword>
<keyword id="KW-0449">Lipoprotein</keyword>
<keyword id="KW-0472">Membrane</keyword>
<keyword id="KW-0564">Palmitate</keyword>
<keyword id="KW-0597">Phosphoprotein</keyword>
<keyword id="KW-0675">Receptor</keyword>
<keyword id="KW-0765">Sulfation</keyword>
<keyword id="KW-0807">Transducer</keyword>
<keyword id="KW-0812">Transmembrane</keyword>
<keyword id="KW-1133">Transmembrane helix</keyword>
<dbReference type="EMBL" id="AF177885">
    <property type="protein sequence ID" value="AAK43368.1"/>
    <property type="molecule type" value="Genomic_DNA"/>
</dbReference>
<dbReference type="SMR" id="Q95NC4"/>
<dbReference type="GlyCosmos" id="Q95NC4">
    <property type="glycosylation" value="2 sites, No reported glycans"/>
</dbReference>
<dbReference type="OrthoDB" id="9876908at2759"/>
<dbReference type="GO" id="GO:0005737">
    <property type="term" value="C:cytoplasm"/>
    <property type="evidence" value="ECO:0007669"/>
    <property type="project" value="TreeGrafter"/>
</dbReference>
<dbReference type="GO" id="GO:0009897">
    <property type="term" value="C:external side of plasma membrane"/>
    <property type="evidence" value="ECO:0000250"/>
    <property type="project" value="UniProtKB"/>
</dbReference>
<dbReference type="GO" id="GO:0016493">
    <property type="term" value="F:C-C chemokine receptor activity"/>
    <property type="evidence" value="ECO:0000250"/>
    <property type="project" value="UniProtKB"/>
</dbReference>
<dbReference type="GO" id="GO:0071791">
    <property type="term" value="F:chemokine (C-C motif) ligand 5 binding"/>
    <property type="evidence" value="ECO:0007669"/>
    <property type="project" value="TreeGrafter"/>
</dbReference>
<dbReference type="GO" id="GO:0019722">
    <property type="term" value="P:calcium-mediated signaling"/>
    <property type="evidence" value="ECO:0007669"/>
    <property type="project" value="TreeGrafter"/>
</dbReference>
<dbReference type="GO" id="GO:0060326">
    <property type="term" value="P:cell chemotaxis"/>
    <property type="evidence" value="ECO:0007669"/>
    <property type="project" value="TreeGrafter"/>
</dbReference>
<dbReference type="GO" id="GO:0006955">
    <property type="term" value="P:immune response"/>
    <property type="evidence" value="ECO:0007669"/>
    <property type="project" value="InterPro"/>
</dbReference>
<dbReference type="GO" id="GO:0006954">
    <property type="term" value="P:inflammatory response"/>
    <property type="evidence" value="ECO:0007669"/>
    <property type="project" value="InterPro"/>
</dbReference>
<dbReference type="GO" id="GO:0007204">
    <property type="term" value="P:positive regulation of cytosolic calcium ion concentration"/>
    <property type="evidence" value="ECO:0007669"/>
    <property type="project" value="TreeGrafter"/>
</dbReference>
<dbReference type="CDD" id="cd15184">
    <property type="entry name" value="7tmA_CCR5_CCR2"/>
    <property type="match status" value="1"/>
</dbReference>
<dbReference type="FunFam" id="1.20.1070.10:FF:000026">
    <property type="entry name" value="C-C chemokine receptor type 5"/>
    <property type="match status" value="1"/>
</dbReference>
<dbReference type="Gene3D" id="1.20.1070.10">
    <property type="entry name" value="Rhodopsin 7-helix transmembrane proteins"/>
    <property type="match status" value="1"/>
</dbReference>
<dbReference type="InterPro" id="IPR050119">
    <property type="entry name" value="CCR1-9-like"/>
</dbReference>
<dbReference type="InterPro" id="IPR002240">
    <property type="entry name" value="Chemokine_CCR5"/>
</dbReference>
<dbReference type="InterPro" id="IPR000355">
    <property type="entry name" value="Chemokine_rcpt"/>
</dbReference>
<dbReference type="InterPro" id="IPR000276">
    <property type="entry name" value="GPCR_Rhodpsn"/>
</dbReference>
<dbReference type="InterPro" id="IPR017452">
    <property type="entry name" value="GPCR_Rhodpsn_7TM"/>
</dbReference>
<dbReference type="PANTHER" id="PTHR10489:SF686">
    <property type="entry name" value="C-C CHEMOKINE RECEPTOR TYPE 5"/>
    <property type="match status" value="1"/>
</dbReference>
<dbReference type="PANTHER" id="PTHR10489">
    <property type="entry name" value="CELL ADHESION MOLECULE"/>
    <property type="match status" value="1"/>
</dbReference>
<dbReference type="Pfam" id="PF00001">
    <property type="entry name" value="7tm_1"/>
    <property type="match status" value="1"/>
</dbReference>
<dbReference type="PRINTS" id="PR00657">
    <property type="entry name" value="CCCHEMOKINER"/>
</dbReference>
<dbReference type="PRINTS" id="PR01110">
    <property type="entry name" value="CHEMOKINER5"/>
</dbReference>
<dbReference type="PRINTS" id="PR00237">
    <property type="entry name" value="GPCRRHODOPSN"/>
</dbReference>
<dbReference type="SUPFAM" id="SSF81321">
    <property type="entry name" value="Family A G protein-coupled receptor-like"/>
    <property type="match status" value="1"/>
</dbReference>
<dbReference type="PROSITE" id="PS00237">
    <property type="entry name" value="G_PROTEIN_RECEP_F1_1"/>
    <property type="match status" value="1"/>
</dbReference>
<dbReference type="PROSITE" id="PS50262">
    <property type="entry name" value="G_PROTEIN_RECEP_F1_2"/>
    <property type="match status" value="1"/>
</dbReference>
<name>CCR5_ATEGE</name>
<comment type="function">
    <text evidence="1">Receptor for a number of inflammatory CC-chemokines including CCL3/MIP-1-alpha, CCL4/MIP-1-beta and RANTES and subsequently transduces a signal by increasing the intracellular calcium ion level. May play a role in the control of granulocytic lineage proliferation or differentiation. Participates in T-lymphocyte migration to the infection site by acting as a chemotactic receptor.</text>
</comment>
<comment type="subunit">
    <text evidence="1">Interacts with PRAF2. Efficient ligand binding to CCL3/MIP-1alpha and CCL4/MIP-1beta requires sulfation, O-glycosylation and sialic acid modifications. Glycosylation on Ser-6 is required for efficient binding of CCL4. Interacts with GRK2. Interacts with ARRB1 and ARRB2. Interacts with CNIH4. Interacts with S100A4; this interaction stimulates T-lymphocyte chemotaxis.</text>
</comment>
<comment type="subcellular location">
    <subcellularLocation>
        <location evidence="2">Cell membrane</location>
        <topology evidence="2">Multi-pass membrane protein</topology>
    </subcellularLocation>
</comment>
<comment type="PTM">
    <text evidence="1">Sulfated on at least 2 of the N-terminal tyrosines. Sulfation is required for efficient binding of the chemokines, CCL3 and CCL4 (By similarity).</text>
</comment>
<comment type="PTM">
    <text evidence="1">Palmitoylation in the C-terminal is important for cell surface expression.</text>
</comment>
<comment type="PTM">
    <text evidence="1">Phosphorylation on serine residues in the C-terminal is stimulated by binding CC chemokines especially by APO-RANTES.</text>
</comment>
<comment type="PTM">
    <text evidence="1">O-glycosylated, but not N-glycosylated. Ser-6 appears to be the major site even if Ser-7 may be also O-glycosylated. Also sialylated glycans present which contribute to chemokine binding. Ser-17 may also be glycosylated and, if so, with small moieties such as a T-antigen.</text>
</comment>
<comment type="similarity">
    <text evidence="4">Belongs to the G-protein coupled receptor 1 family.</text>
</comment>
<proteinExistence type="inferred from homology"/>
<sequence length="352" mass="40441">MDYQVSSPIYDIDYGASEPCRKTDVKQMGAHLLPPLYSMVFLFGFVGNMLVVLILVNCKRPKSMTDIYLLNLAISDLLFLFTVPFWAHYAAGQWDFGNTMCQFLTGLYFIGFFSGIFFIILLTIDRYLAIVHAVFALKARTVTFGVMTSVITWVVAVFASLPGIIFTRSQKEGYHYTCSPHFPFGQYQFWKNFETLKMVILGLVLPLLVMVICYSGILKTLLRCRNEKKRHRAVRLIFTIMIVYFLFWAPYNIVLLLNTYQEFFGLNNCSSSNRLDQAMQVTETLGMTHCCVNPIIYAFVGEKFRNYLLVFFQKHIAKCFCECCSIFQKEAPERANSVYTRSTGEQEISVGL</sequence>
<accession>Q95NC4</accession>